<dbReference type="EC" id="3.5.4.13" evidence="1"/>
<dbReference type="EMBL" id="AE017282">
    <property type="protein sequence ID" value="AAU90812.1"/>
    <property type="molecule type" value="Genomic_DNA"/>
</dbReference>
<dbReference type="RefSeq" id="WP_010959425.1">
    <property type="nucleotide sequence ID" value="NC_002977.6"/>
</dbReference>
<dbReference type="SMR" id="Q60CV1"/>
<dbReference type="STRING" id="243233.MCA0053"/>
<dbReference type="GeneID" id="88222403"/>
<dbReference type="KEGG" id="mca:MCA0053"/>
<dbReference type="eggNOG" id="COG0717">
    <property type="taxonomic scope" value="Bacteria"/>
</dbReference>
<dbReference type="HOGENOM" id="CLU_087476_4_0_6"/>
<dbReference type="UniPathway" id="UPA00610">
    <property type="reaction ID" value="UER00665"/>
</dbReference>
<dbReference type="Proteomes" id="UP000006821">
    <property type="component" value="Chromosome"/>
</dbReference>
<dbReference type="GO" id="GO:0008829">
    <property type="term" value="F:dCTP deaminase activity"/>
    <property type="evidence" value="ECO:0007669"/>
    <property type="project" value="UniProtKB-UniRule"/>
</dbReference>
<dbReference type="GO" id="GO:0000166">
    <property type="term" value="F:nucleotide binding"/>
    <property type="evidence" value="ECO:0007669"/>
    <property type="project" value="UniProtKB-KW"/>
</dbReference>
<dbReference type="GO" id="GO:0006226">
    <property type="term" value="P:dUMP biosynthetic process"/>
    <property type="evidence" value="ECO:0007669"/>
    <property type="project" value="UniProtKB-UniPathway"/>
</dbReference>
<dbReference type="GO" id="GO:0006229">
    <property type="term" value="P:dUTP biosynthetic process"/>
    <property type="evidence" value="ECO:0007669"/>
    <property type="project" value="UniProtKB-UniRule"/>
</dbReference>
<dbReference type="GO" id="GO:0015949">
    <property type="term" value="P:nucleobase-containing small molecule interconversion"/>
    <property type="evidence" value="ECO:0007669"/>
    <property type="project" value="TreeGrafter"/>
</dbReference>
<dbReference type="CDD" id="cd07557">
    <property type="entry name" value="trimeric_dUTPase"/>
    <property type="match status" value="1"/>
</dbReference>
<dbReference type="FunFam" id="2.70.40.10:FF:000001">
    <property type="entry name" value="dCTP deaminase"/>
    <property type="match status" value="1"/>
</dbReference>
<dbReference type="Gene3D" id="2.70.40.10">
    <property type="match status" value="1"/>
</dbReference>
<dbReference type="HAMAP" id="MF_00146">
    <property type="entry name" value="dCTP_deaminase"/>
    <property type="match status" value="1"/>
</dbReference>
<dbReference type="InterPro" id="IPR011962">
    <property type="entry name" value="dCTP_deaminase"/>
</dbReference>
<dbReference type="InterPro" id="IPR036157">
    <property type="entry name" value="dUTPase-like_sf"/>
</dbReference>
<dbReference type="InterPro" id="IPR033704">
    <property type="entry name" value="dUTPase_trimeric"/>
</dbReference>
<dbReference type="NCBIfam" id="TIGR02274">
    <property type="entry name" value="dCTP_deam"/>
    <property type="match status" value="1"/>
</dbReference>
<dbReference type="PANTHER" id="PTHR42680">
    <property type="entry name" value="DCTP DEAMINASE"/>
    <property type="match status" value="1"/>
</dbReference>
<dbReference type="PANTHER" id="PTHR42680:SF3">
    <property type="entry name" value="DCTP DEAMINASE"/>
    <property type="match status" value="1"/>
</dbReference>
<dbReference type="Pfam" id="PF22769">
    <property type="entry name" value="DCD"/>
    <property type="match status" value="1"/>
</dbReference>
<dbReference type="SUPFAM" id="SSF51283">
    <property type="entry name" value="dUTPase-like"/>
    <property type="match status" value="1"/>
</dbReference>
<reference key="1">
    <citation type="journal article" date="2004" name="PLoS Biol.">
        <title>Genomic insights into methanotrophy: the complete genome sequence of Methylococcus capsulatus (Bath).</title>
        <authorList>
            <person name="Ward N.L."/>
            <person name="Larsen O."/>
            <person name="Sakwa J."/>
            <person name="Bruseth L."/>
            <person name="Khouri H.M."/>
            <person name="Durkin A.S."/>
            <person name="Dimitrov G."/>
            <person name="Jiang L."/>
            <person name="Scanlan D."/>
            <person name="Kang K.H."/>
            <person name="Lewis M.R."/>
            <person name="Nelson K.E."/>
            <person name="Methe B.A."/>
            <person name="Wu M."/>
            <person name="Heidelberg J.F."/>
            <person name="Paulsen I.T."/>
            <person name="Fouts D.E."/>
            <person name="Ravel J."/>
            <person name="Tettelin H."/>
            <person name="Ren Q."/>
            <person name="Read T.D."/>
            <person name="DeBoy R.T."/>
            <person name="Seshadri R."/>
            <person name="Salzberg S.L."/>
            <person name="Jensen H.B."/>
            <person name="Birkeland N.K."/>
            <person name="Nelson W.C."/>
            <person name="Dodson R.J."/>
            <person name="Grindhaug S.H."/>
            <person name="Holt I.E."/>
            <person name="Eidhammer I."/>
            <person name="Jonasen I."/>
            <person name="Vanaken S."/>
            <person name="Utterback T.R."/>
            <person name="Feldblyum T.V."/>
            <person name="Fraser C.M."/>
            <person name="Lillehaug J.R."/>
            <person name="Eisen J.A."/>
        </authorList>
    </citation>
    <scope>NUCLEOTIDE SEQUENCE [LARGE SCALE GENOMIC DNA]</scope>
    <source>
        <strain>ATCC 33009 / NCIMB 11132 / Bath</strain>
    </source>
</reference>
<comment type="function">
    <text evidence="1">Catalyzes the deamination of dCTP to dUTP.</text>
</comment>
<comment type="catalytic activity">
    <reaction evidence="1">
        <text>dCTP + H2O + H(+) = dUTP + NH4(+)</text>
        <dbReference type="Rhea" id="RHEA:22680"/>
        <dbReference type="ChEBI" id="CHEBI:15377"/>
        <dbReference type="ChEBI" id="CHEBI:15378"/>
        <dbReference type="ChEBI" id="CHEBI:28938"/>
        <dbReference type="ChEBI" id="CHEBI:61481"/>
        <dbReference type="ChEBI" id="CHEBI:61555"/>
        <dbReference type="EC" id="3.5.4.13"/>
    </reaction>
</comment>
<comment type="pathway">
    <text evidence="1">Pyrimidine metabolism; dUMP biosynthesis; dUMP from dCTP (dUTP route): step 1/2.</text>
</comment>
<comment type="subunit">
    <text evidence="1">Homotrimer.</text>
</comment>
<comment type="similarity">
    <text evidence="1">Belongs to the dCTP deaminase family.</text>
</comment>
<organism>
    <name type="scientific">Methylococcus capsulatus (strain ATCC 33009 / NCIMB 11132 / Bath)</name>
    <dbReference type="NCBI Taxonomy" id="243233"/>
    <lineage>
        <taxon>Bacteria</taxon>
        <taxon>Pseudomonadati</taxon>
        <taxon>Pseudomonadota</taxon>
        <taxon>Gammaproteobacteria</taxon>
        <taxon>Methylococcales</taxon>
        <taxon>Methylococcaceae</taxon>
        <taxon>Methylococcus</taxon>
    </lineage>
</organism>
<feature type="chain" id="PRO_1000009751" description="dCTP deaminase">
    <location>
        <begin position="1"/>
        <end position="188"/>
    </location>
</feature>
<feature type="active site" description="Proton donor/acceptor" evidence="1">
    <location>
        <position position="137"/>
    </location>
</feature>
<feature type="binding site" evidence="1">
    <location>
        <begin position="111"/>
        <end position="116"/>
    </location>
    <ligand>
        <name>dCTP</name>
        <dbReference type="ChEBI" id="CHEBI:61481"/>
    </ligand>
</feature>
<feature type="binding site" evidence="1">
    <location>
        <begin position="135"/>
        <end position="137"/>
    </location>
    <ligand>
        <name>dCTP</name>
        <dbReference type="ChEBI" id="CHEBI:61481"/>
    </ligand>
</feature>
<feature type="binding site" evidence="1">
    <location>
        <position position="156"/>
    </location>
    <ligand>
        <name>dCTP</name>
        <dbReference type="ChEBI" id="CHEBI:61481"/>
    </ligand>
</feature>
<feature type="binding site" evidence="1">
    <location>
        <position position="170"/>
    </location>
    <ligand>
        <name>dCTP</name>
        <dbReference type="ChEBI" id="CHEBI:61481"/>
    </ligand>
</feature>
<feature type="binding site" evidence="1">
    <location>
        <position position="180"/>
    </location>
    <ligand>
        <name>dCTP</name>
        <dbReference type="ChEBI" id="CHEBI:61481"/>
    </ligand>
</feature>
<name>DCD_METCA</name>
<gene>
    <name evidence="1" type="primary">dcd</name>
    <name type="ordered locus">MCA0053</name>
</gene>
<sequence>MGIKSDRWIRKMAREHGMIEPFEPHQVRHGDCSSVISYGTSSYGYDVRCSNEFKIFTNINSAIVDPKNFDQNSFVDLVSDVCIIPPNSFALARTVEYFRIPRDVLTICLGKSTYARCGIIVNVTPLEPEWEGHVTLEFSNTTPLPAKIYANEGVAQVLFLGADDVCETSYRDRSGKYQGQTGVTLPKA</sequence>
<accession>Q60CV1</accession>
<keyword id="KW-0378">Hydrolase</keyword>
<keyword id="KW-0546">Nucleotide metabolism</keyword>
<keyword id="KW-0547">Nucleotide-binding</keyword>
<keyword id="KW-1185">Reference proteome</keyword>
<evidence type="ECO:0000255" key="1">
    <source>
        <dbReference type="HAMAP-Rule" id="MF_00146"/>
    </source>
</evidence>
<protein>
    <recommendedName>
        <fullName evidence="1">dCTP deaminase</fullName>
        <ecNumber evidence="1">3.5.4.13</ecNumber>
    </recommendedName>
    <alternativeName>
        <fullName evidence="1">Deoxycytidine triphosphate deaminase</fullName>
    </alternativeName>
</protein>
<proteinExistence type="inferred from homology"/>